<proteinExistence type="evidence at protein level"/>
<dbReference type="EMBL" id="Z49808">
    <property type="protein sequence ID" value="CAA89910.1"/>
    <property type="molecule type" value="Genomic_DNA"/>
</dbReference>
<dbReference type="EMBL" id="AY723854">
    <property type="protein sequence ID" value="AAU09771.1"/>
    <property type="molecule type" value="Genomic_DNA"/>
</dbReference>
<dbReference type="EMBL" id="BK006946">
    <property type="protein sequence ID" value="DAA10074.1"/>
    <property type="molecule type" value="Genomic_DNA"/>
</dbReference>
<dbReference type="PIR" id="S55124">
    <property type="entry name" value="S55124"/>
</dbReference>
<dbReference type="RefSeq" id="NP_013902.1">
    <property type="nucleotide sequence ID" value="NM_001182683.1"/>
</dbReference>
<dbReference type="BioGRID" id="35355">
    <property type="interactions" value="58"/>
</dbReference>
<dbReference type="DIP" id="DIP-4694N"/>
<dbReference type="FunCoup" id="Q03218">
    <property type="interactions" value="106"/>
</dbReference>
<dbReference type="IntAct" id="Q03218">
    <property type="interactions" value="1"/>
</dbReference>
<dbReference type="STRING" id="4932.YMR177W"/>
<dbReference type="PaxDb" id="4932-YMR177W"/>
<dbReference type="PeptideAtlas" id="Q03218"/>
<dbReference type="EnsemblFungi" id="YMR177W_mRNA">
    <property type="protein sequence ID" value="YMR177W"/>
    <property type="gene ID" value="YMR177W"/>
</dbReference>
<dbReference type="GeneID" id="855215"/>
<dbReference type="KEGG" id="sce:YMR177W"/>
<dbReference type="AGR" id="SGD:S000004789"/>
<dbReference type="SGD" id="S000004789">
    <property type="gene designation" value="MMT1"/>
</dbReference>
<dbReference type="VEuPathDB" id="FungiDB:YMR177W"/>
<dbReference type="eggNOG" id="KOG1485">
    <property type="taxonomic scope" value="Eukaryota"/>
</dbReference>
<dbReference type="GeneTree" id="ENSGT00940000176753"/>
<dbReference type="HOGENOM" id="CLU_013430_12_2_1"/>
<dbReference type="InParanoid" id="Q03218"/>
<dbReference type="OMA" id="GVYFHSQ"/>
<dbReference type="OrthoDB" id="435980at2759"/>
<dbReference type="BioCyc" id="YEAST:G3O-32865-MONOMER"/>
<dbReference type="BioGRID-ORCS" id="855215">
    <property type="hits" value="7 hits in 10 CRISPR screens"/>
</dbReference>
<dbReference type="PRO" id="PR:Q03218"/>
<dbReference type="Proteomes" id="UP000002311">
    <property type="component" value="Chromosome XIII"/>
</dbReference>
<dbReference type="RNAct" id="Q03218">
    <property type="molecule type" value="protein"/>
</dbReference>
<dbReference type="GO" id="GO:0016020">
    <property type="term" value="C:membrane"/>
    <property type="evidence" value="ECO:0000318"/>
    <property type="project" value="GO_Central"/>
</dbReference>
<dbReference type="GO" id="GO:0031966">
    <property type="term" value="C:mitochondrial membrane"/>
    <property type="evidence" value="ECO:0007669"/>
    <property type="project" value="UniProtKB-SubCell"/>
</dbReference>
<dbReference type="GO" id="GO:0005739">
    <property type="term" value="C:mitochondrion"/>
    <property type="evidence" value="ECO:0000314"/>
    <property type="project" value="SGD"/>
</dbReference>
<dbReference type="GO" id="GO:0008324">
    <property type="term" value="F:monoatomic cation transmembrane transporter activity"/>
    <property type="evidence" value="ECO:0000318"/>
    <property type="project" value="GO_Central"/>
</dbReference>
<dbReference type="GO" id="GO:0006879">
    <property type="term" value="P:intracellular iron ion homeostasis"/>
    <property type="evidence" value="ECO:0000315"/>
    <property type="project" value="SGD"/>
</dbReference>
<dbReference type="GO" id="GO:0006826">
    <property type="term" value="P:iron ion transport"/>
    <property type="evidence" value="ECO:0007669"/>
    <property type="project" value="UniProtKB-KW"/>
</dbReference>
<dbReference type="FunFam" id="1.20.1510.10:FF:000013">
    <property type="entry name" value="Cation efflux family protein"/>
    <property type="match status" value="1"/>
</dbReference>
<dbReference type="Gene3D" id="1.20.1510.10">
    <property type="entry name" value="Cation efflux protein transmembrane domain"/>
    <property type="match status" value="1"/>
</dbReference>
<dbReference type="InterPro" id="IPR002524">
    <property type="entry name" value="Cation_efflux"/>
</dbReference>
<dbReference type="InterPro" id="IPR027469">
    <property type="entry name" value="Cation_efflux_TMD_sf"/>
</dbReference>
<dbReference type="InterPro" id="IPR050291">
    <property type="entry name" value="CDF_Transporter"/>
</dbReference>
<dbReference type="NCBIfam" id="TIGR01297">
    <property type="entry name" value="CDF"/>
    <property type="match status" value="1"/>
</dbReference>
<dbReference type="PANTHER" id="PTHR43840">
    <property type="entry name" value="MITOCHONDRIAL METAL TRANSPORTER 1-RELATED"/>
    <property type="match status" value="1"/>
</dbReference>
<dbReference type="PANTHER" id="PTHR43840:SF15">
    <property type="entry name" value="MITOCHONDRIAL METAL TRANSPORTER 1-RELATED"/>
    <property type="match status" value="1"/>
</dbReference>
<dbReference type="Pfam" id="PF01545">
    <property type="entry name" value="Cation_efflux"/>
    <property type="match status" value="1"/>
</dbReference>
<dbReference type="SUPFAM" id="SSF161111">
    <property type="entry name" value="Cation efflux protein transmembrane domain-like"/>
    <property type="match status" value="1"/>
</dbReference>
<reference key="1">
    <citation type="journal article" date="1997" name="Nature">
        <title>The nucleotide sequence of Saccharomyces cerevisiae chromosome XIII.</title>
        <authorList>
            <person name="Bowman S."/>
            <person name="Churcher C.M."/>
            <person name="Badcock K."/>
            <person name="Brown D."/>
            <person name="Chillingworth T."/>
            <person name="Connor R."/>
            <person name="Dedman K."/>
            <person name="Devlin K."/>
            <person name="Gentles S."/>
            <person name="Hamlin N."/>
            <person name="Hunt S."/>
            <person name="Jagels K."/>
            <person name="Lye G."/>
            <person name="Moule S."/>
            <person name="Odell C."/>
            <person name="Pearson D."/>
            <person name="Rajandream M.A."/>
            <person name="Rice P."/>
            <person name="Skelton J."/>
            <person name="Walsh S.V."/>
            <person name="Whitehead S."/>
            <person name="Barrell B.G."/>
        </authorList>
    </citation>
    <scope>NUCLEOTIDE SEQUENCE [LARGE SCALE GENOMIC DNA]</scope>
    <source>
        <strain>ATCC 204508 / S288c</strain>
    </source>
</reference>
<reference key="2">
    <citation type="journal article" date="2014" name="G3 (Bethesda)">
        <title>The reference genome sequence of Saccharomyces cerevisiae: Then and now.</title>
        <authorList>
            <person name="Engel S.R."/>
            <person name="Dietrich F.S."/>
            <person name="Fisk D.G."/>
            <person name="Binkley G."/>
            <person name="Balakrishnan R."/>
            <person name="Costanzo M.C."/>
            <person name="Dwight S.S."/>
            <person name="Hitz B.C."/>
            <person name="Karra K."/>
            <person name="Nash R.S."/>
            <person name="Weng S."/>
            <person name="Wong E.D."/>
            <person name="Lloyd P."/>
            <person name="Skrzypek M.S."/>
            <person name="Miyasato S.R."/>
            <person name="Simison M."/>
            <person name="Cherry J.M."/>
        </authorList>
    </citation>
    <scope>GENOME REANNOTATION</scope>
    <source>
        <strain>ATCC 204508 / S288c</strain>
    </source>
</reference>
<reference key="3">
    <citation type="journal article" date="2007" name="Genome Res.">
        <title>Approaching a complete repository of sequence-verified protein-encoding clones for Saccharomyces cerevisiae.</title>
        <authorList>
            <person name="Hu Y."/>
            <person name="Rolfs A."/>
            <person name="Bhullar B."/>
            <person name="Murthy T.V.S."/>
            <person name="Zhu C."/>
            <person name="Berger M.F."/>
            <person name="Camargo A.A."/>
            <person name="Kelley F."/>
            <person name="McCarron S."/>
            <person name="Jepson D."/>
            <person name="Richardson A."/>
            <person name="Raphael J."/>
            <person name="Moreira D."/>
            <person name="Taycher E."/>
            <person name="Zuo D."/>
            <person name="Mohr S."/>
            <person name="Kane M.F."/>
            <person name="Williamson J."/>
            <person name="Simpson A.J.G."/>
            <person name="Bulyk M.L."/>
            <person name="Harlow E."/>
            <person name="Marsischky G."/>
            <person name="Kolodner R.D."/>
            <person name="LaBaer J."/>
        </authorList>
    </citation>
    <scope>NUCLEOTIDE SEQUENCE [GENOMIC DNA]</scope>
    <source>
        <strain>ATCC 204508 / S288c</strain>
    </source>
</reference>
<reference key="4">
    <citation type="journal article" date="1997" name="J. Biol. Chem.">
        <title>Characterization of two homologous yeast genes that encode mitochondrial iron transporters.</title>
        <authorList>
            <person name="Li L."/>
            <person name="Kaplan J."/>
        </authorList>
    </citation>
    <scope>FUNCTION</scope>
    <scope>SUBCELLULAR LOCATION</scope>
</reference>
<reference key="5">
    <citation type="journal article" date="2003" name="Nature">
        <title>Global analysis of protein expression in yeast.</title>
        <authorList>
            <person name="Ghaemmaghami S."/>
            <person name="Huh W.-K."/>
            <person name="Bower K."/>
            <person name="Howson R.W."/>
            <person name="Belle A."/>
            <person name="Dephoure N."/>
            <person name="O'Shea E.K."/>
            <person name="Weissman J.S."/>
        </authorList>
    </citation>
    <scope>LEVEL OF PROTEIN EXPRESSION [LARGE SCALE ANALYSIS]</scope>
</reference>
<reference key="6">
    <citation type="journal article" date="2004" name="J. Biol. Chem.">
        <title>Mutations in Saccharomyces cerevisiae iron-sulfur cluster assembly genes and oxidative stress relevant to Cu,Zn superoxide dismutase.</title>
        <authorList>
            <person name="Jensen L.T."/>
            <person name="Sanchez R.J."/>
            <person name="Srinivasan C."/>
            <person name="Valentine J.S."/>
            <person name="Culotta V.C."/>
        </authorList>
    </citation>
    <scope>FUNCTION</scope>
</reference>
<gene>
    <name type="primary">MMT1</name>
    <name type="synonym">MFT1</name>
    <name type="ordered locus">YMR177W</name>
    <name type="ORF">YM8010.07</name>
</gene>
<sequence>MLRICVKRPCIKIVLSQVRPALLVRKENLHISTGVKVEKSSIINQKDPNKVRVEINELKRQAEIEKAAIKELEKNPQYQKLAEAFNSHDHVHLRESETEQNDIISLGTIRDYKSSKCEQADKPSSLNLHSHTHSHGHTHSHAAHNPLLVLSTEQIRKNAGVRITWVGLGVNVGIAIGKFFGGIVFHSQALFADAIHAISDMVSDLLTLLSVGLAANKPTADYPYGYGKIETVGSLAVSTILAMAGISIGWSSLCALVGPVIPHTIIDTIGNLGHAHTYSEDIIEDVTDINAAWIAAASIAAKEWIFRATRKIAINTNSNVLMANAWHHRVDSLTSLVALVAISTGYLVNIQSLDTIGGLIVSGLIIKAGGEGMCIAIKELIDQSVSRDDPRYLEIETLVKDTLNKLISNNNSQKPYGLKELTLLSSGPNLRGHLTLEVPLQKWGNILGVNEFEIVTHHLRNVLTNEVSNLRRLDIEYVEEKNGEENEHIKGQQNYKEDVLIKHDHTNTHI</sequence>
<evidence type="ECO:0000255" key="1"/>
<evidence type="ECO:0000256" key="2">
    <source>
        <dbReference type="SAM" id="MobiDB-lite"/>
    </source>
</evidence>
<evidence type="ECO:0000269" key="3">
    <source>
    </source>
</evidence>
<evidence type="ECO:0000269" key="4">
    <source>
    </source>
</evidence>
<evidence type="ECO:0000269" key="5">
    <source>
    </source>
</evidence>
<evidence type="ECO:0000305" key="6"/>
<organism>
    <name type="scientific">Saccharomyces cerevisiae (strain ATCC 204508 / S288c)</name>
    <name type="common">Baker's yeast</name>
    <dbReference type="NCBI Taxonomy" id="559292"/>
    <lineage>
        <taxon>Eukaryota</taxon>
        <taxon>Fungi</taxon>
        <taxon>Dikarya</taxon>
        <taxon>Ascomycota</taxon>
        <taxon>Saccharomycotina</taxon>
        <taxon>Saccharomycetes</taxon>
        <taxon>Saccharomycetales</taxon>
        <taxon>Saccharomycetaceae</taxon>
        <taxon>Saccharomyces</taxon>
    </lineage>
</organism>
<keyword id="KW-0406">Ion transport</keyword>
<keyword id="KW-0408">Iron</keyword>
<keyword id="KW-0409">Iron storage</keyword>
<keyword id="KW-0410">Iron transport</keyword>
<keyword id="KW-0472">Membrane</keyword>
<keyword id="KW-0496">Mitochondrion</keyword>
<keyword id="KW-1185">Reference proteome</keyword>
<keyword id="KW-0809">Transit peptide</keyword>
<keyword id="KW-0812">Transmembrane</keyword>
<keyword id="KW-1133">Transmembrane helix</keyword>
<keyword id="KW-0813">Transport</keyword>
<feature type="transit peptide" description="Mitochondrion" evidence="1">
    <location>
        <begin position="1"/>
        <end status="unknown"/>
    </location>
</feature>
<feature type="chain" id="PRO_0000203318" description="Mitochondrial metal transporter 1">
    <location>
        <begin status="unknown"/>
        <end position="510"/>
    </location>
</feature>
<feature type="transmembrane region" description="Helical" evidence="1">
    <location>
        <begin position="165"/>
        <end position="185"/>
    </location>
</feature>
<feature type="transmembrane region" description="Helical" evidence="1">
    <location>
        <begin position="194"/>
        <end position="214"/>
    </location>
</feature>
<feature type="transmembrane region" description="Helical" evidence="1">
    <location>
        <begin position="241"/>
        <end position="261"/>
    </location>
</feature>
<feature type="transmembrane region" description="Helical" evidence="1">
    <location>
        <begin position="286"/>
        <end position="306"/>
    </location>
</feature>
<feature type="transmembrane region" description="Helical" evidence="1">
    <location>
        <begin position="333"/>
        <end position="353"/>
    </location>
</feature>
<feature type="transmembrane region" description="Helical" evidence="1">
    <location>
        <begin position="356"/>
        <end position="376"/>
    </location>
</feature>
<feature type="region of interest" description="Disordered" evidence="2">
    <location>
        <begin position="120"/>
        <end position="141"/>
    </location>
</feature>
<feature type="compositionally biased region" description="Basic residues" evidence="2">
    <location>
        <begin position="130"/>
        <end position="141"/>
    </location>
</feature>
<feature type="sequence conflict" description="In Ref. 3; AAU09771." evidence="6" ref="3">
    <original>S</original>
    <variation>P</variation>
    <location>
        <position position="408"/>
    </location>
</feature>
<comment type="function">
    <text evidence="4 5">Mitochondrial metal transporter involved in mitochondrial iron accumulation.</text>
</comment>
<comment type="subcellular location">
    <subcellularLocation>
        <location evidence="5">Mitochondrion membrane</location>
        <topology evidence="5">Multi-pass membrane protein</topology>
    </subcellularLocation>
</comment>
<comment type="miscellaneous">
    <text evidence="3">Present with 6490 molecules/cell in log phase SD medium.</text>
</comment>
<comment type="similarity">
    <text evidence="6">Belongs to the cation diffusion facilitator (CDF) transporter (TC 2.A.4) family. SLC30A subfamily.</text>
</comment>
<name>MMT1_YEAST</name>
<accession>Q03218</accession>
<accession>D6W000</accession>
<accession>Q66R35</accession>
<protein>
    <recommendedName>
        <fullName>Mitochondrial metal transporter 1</fullName>
    </recommendedName>
</protein>